<feature type="transit peptide" description="Mitochondrion" evidence="1">
    <location>
        <begin position="1"/>
        <end position="24"/>
    </location>
</feature>
<feature type="chain" id="PRO_0000032892" description="Superoxide dismutase [Mn], mitochondrial">
    <location>
        <begin position="25"/>
        <end position="228"/>
    </location>
</feature>
<feature type="binding site" evidence="1">
    <location>
        <position position="52"/>
    </location>
    <ligand>
        <name>Mn(2+)</name>
        <dbReference type="ChEBI" id="CHEBI:29035"/>
    </ligand>
</feature>
<feature type="binding site" evidence="1">
    <location>
        <position position="100"/>
    </location>
    <ligand>
        <name>Mn(2+)</name>
        <dbReference type="ChEBI" id="CHEBI:29035"/>
    </ligand>
</feature>
<feature type="binding site" evidence="1">
    <location>
        <position position="189"/>
    </location>
    <ligand>
        <name>Mn(2+)</name>
        <dbReference type="ChEBI" id="CHEBI:29035"/>
    </ligand>
</feature>
<feature type="binding site" evidence="1">
    <location>
        <position position="193"/>
    </location>
    <ligand>
        <name>Mn(2+)</name>
        <dbReference type="ChEBI" id="CHEBI:29035"/>
    </ligand>
</feature>
<protein>
    <recommendedName>
        <fullName>Superoxide dismutase [Mn], mitochondrial</fullName>
        <ecNumber>1.15.1.1</ecNumber>
    </recommendedName>
</protein>
<dbReference type="EC" id="1.15.1.1"/>
<dbReference type="EMBL" id="AF036936">
    <property type="protein sequence ID" value="AAB88870.1"/>
    <property type="molecule type" value="mRNA"/>
</dbReference>
<dbReference type="PIR" id="T08045">
    <property type="entry name" value="T08045"/>
</dbReference>
<dbReference type="RefSeq" id="NP_001311927.1">
    <property type="nucleotide sequence ID" value="NM_001324998.1"/>
</dbReference>
<dbReference type="SMR" id="O49066"/>
<dbReference type="GeneID" id="107871142"/>
<dbReference type="KEGG" id="cann:107871142"/>
<dbReference type="OrthoDB" id="239262at2759"/>
<dbReference type="GO" id="GO:0005759">
    <property type="term" value="C:mitochondrial matrix"/>
    <property type="evidence" value="ECO:0007669"/>
    <property type="project" value="UniProtKB-SubCell"/>
</dbReference>
<dbReference type="GO" id="GO:0046872">
    <property type="term" value="F:metal ion binding"/>
    <property type="evidence" value="ECO:0007669"/>
    <property type="project" value="UniProtKB-KW"/>
</dbReference>
<dbReference type="GO" id="GO:0004784">
    <property type="term" value="F:superoxide dismutase activity"/>
    <property type="evidence" value="ECO:0007669"/>
    <property type="project" value="UniProtKB-EC"/>
</dbReference>
<dbReference type="FunFam" id="1.10.287.990:FF:000001">
    <property type="entry name" value="Superoxide dismutase"/>
    <property type="match status" value="1"/>
</dbReference>
<dbReference type="FunFam" id="3.55.40.20:FF:000002">
    <property type="entry name" value="Superoxide dismutase"/>
    <property type="match status" value="1"/>
</dbReference>
<dbReference type="Gene3D" id="1.10.287.990">
    <property type="entry name" value="Fe,Mn superoxide dismutase (SOD) domain"/>
    <property type="match status" value="1"/>
</dbReference>
<dbReference type="Gene3D" id="3.55.40.20">
    <property type="entry name" value="Iron/manganese superoxide dismutase, C-terminal domain"/>
    <property type="match status" value="1"/>
</dbReference>
<dbReference type="InterPro" id="IPR050265">
    <property type="entry name" value="Fe/Mn_Superoxide_Dismutase"/>
</dbReference>
<dbReference type="InterPro" id="IPR001189">
    <property type="entry name" value="Mn/Fe_SOD"/>
</dbReference>
<dbReference type="InterPro" id="IPR019833">
    <property type="entry name" value="Mn/Fe_SOD_BS"/>
</dbReference>
<dbReference type="InterPro" id="IPR019832">
    <property type="entry name" value="Mn/Fe_SOD_C"/>
</dbReference>
<dbReference type="InterPro" id="IPR019831">
    <property type="entry name" value="Mn/Fe_SOD_N"/>
</dbReference>
<dbReference type="InterPro" id="IPR036324">
    <property type="entry name" value="Mn/Fe_SOD_N_sf"/>
</dbReference>
<dbReference type="InterPro" id="IPR036314">
    <property type="entry name" value="SOD_C_sf"/>
</dbReference>
<dbReference type="PANTHER" id="PTHR11404">
    <property type="entry name" value="SUPEROXIDE DISMUTASE 2"/>
    <property type="match status" value="1"/>
</dbReference>
<dbReference type="PANTHER" id="PTHR11404:SF6">
    <property type="entry name" value="SUPEROXIDE DISMUTASE [MN], MITOCHONDRIAL"/>
    <property type="match status" value="1"/>
</dbReference>
<dbReference type="Pfam" id="PF02777">
    <property type="entry name" value="Sod_Fe_C"/>
    <property type="match status" value="1"/>
</dbReference>
<dbReference type="Pfam" id="PF00081">
    <property type="entry name" value="Sod_Fe_N"/>
    <property type="match status" value="1"/>
</dbReference>
<dbReference type="PIRSF" id="PIRSF000349">
    <property type="entry name" value="SODismutase"/>
    <property type="match status" value="1"/>
</dbReference>
<dbReference type="PRINTS" id="PR01703">
    <property type="entry name" value="MNSODISMTASE"/>
</dbReference>
<dbReference type="SUPFAM" id="SSF54719">
    <property type="entry name" value="Fe,Mn superoxide dismutase (SOD), C-terminal domain"/>
    <property type="match status" value="1"/>
</dbReference>
<dbReference type="SUPFAM" id="SSF46609">
    <property type="entry name" value="Fe,Mn superoxide dismutase (SOD), N-terminal domain"/>
    <property type="match status" value="1"/>
</dbReference>
<dbReference type="PROSITE" id="PS00088">
    <property type="entry name" value="SOD_MN"/>
    <property type="match status" value="1"/>
</dbReference>
<accession>O49066</accession>
<organism>
    <name type="scientific">Capsicum annuum</name>
    <name type="common">Capsicum pepper</name>
    <dbReference type="NCBI Taxonomy" id="4072"/>
    <lineage>
        <taxon>Eukaryota</taxon>
        <taxon>Viridiplantae</taxon>
        <taxon>Streptophyta</taxon>
        <taxon>Embryophyta</taxon>
        <taxon>Tracheophyta</taxon>
        <taxon>Spermatophyta</taxon>
        <taxon>Magnoliopsida</taxon>
        <taxon>eudicotyledons</taxon>
        <taxon>Gunneridae</taxon>
        <taxon>Pentapetalae</taxon>
        <taxon>asterids</taxon>
        <taxon>lamiids</taxon>
        <taxon>Solanales</taxon>
        <taxon>Solanaceae</taxon>
        <taxon>Solanoideae</taxon>
        <taxon>Capsiceae</taxon>
        <taxon>Capsicum</taxon>
    </lineage>
</organism>
<evidence type="ECO:0000250" key="1"/>
<evidence type="ECO:0000305" key="2"/>
<reference key="1">
    <citation type="submission" date="1997-12" db="EMBL/GenBank/DDBJ databases">
        <authorList>
            <person name="Il K.S."/>
            <person name="Sun A.C."/>
        </authorList>
    </citation>
    <scope>NUCLEOTIDE SEQUENCE [MRNA]</scope>
</reference>
<proteinExistence type="evidence at transcript level"/>
<name>SODM_CAPAN</name>
<keyword id="KW-0464">Manganese</keyword>
<keyword id="KW-0479">Metal-binding</keyword>
<keyword id="KW-0496">Mitochondrion</keyword>
<keyword id="KW-0560">Oxidoreductase</keyword>
<keyword id="KW-0809">Transit peptide</keyword>
<sequence length="228" mass="25512">MALRNLMTKKPFAGILTFRQQLRCVQTFSLPDLSYDYGALEPAISGEIMQLHHQKHHQTYITNYNNALQQLHDAINKGDSPTVAKLQGAIKFNGGGHINHSVFWKNLAPTREGGGEPPKGSLGSAIDTNFGSLEAVIQKMNAEGAALQGSGWVWLGLDKELKRLVIETTANQDPLVIKGPNLVPLLGIDVWEHAYYLQYKNVKPDYLKNIWKVINWKYAAEVYEKECP</sequence>
<comment type="function">
    <text>Destroys superoxide anion radicals which are normally produced within the cells and which are toxic to biological systems.</text>
</comment>
<comment type="catalytic activity">
    <reaction>
        <text>2 superoxide + 2 H(+) = H2O2 + O2</text>
        <dbReference type="Rhea" id="RHEA:20696"/>
        <dbReference type="ChEBI" id="CHEBI:15378"/>
        <dbReference type="ChEBI" id="CHEBI:15379"/>
        <dbReference type="ChEBI" id="CHEBI:16240"/>
        <dbReference type="ChEBI" id="CHEBI:18421"/>
        <dbReference type="EC" id="1.15.1.1"/>
    </reaction>
</comment>
<comment type="cofactor">
    <cofactor evidence="1">
        <name>Mn(2+)</name>
        <dbReference type="ChEBI" id="CHEBI:29035"/>
    </cofactor>
    <text evidence="1">Binds 1 Mn(2+) ion per subunit.</text>
</comment>
<comment type="subunit">
    <text evidence="1">Homotetramer.</text>
</comment>
<comment type="subcellular location">
    <subcellularLocation>
        <location>Mitochondrion matrix</location>
    </subcellularLocation>
</comment>
<comment type="similarity">
    <text evidence="2">Belongs to the iron/manganese superoxide dismutase family.</text>
</comment>
<gene>
    <name type="primary">SODA</name>
</gene>